<feature type="chain" id="PRO_0000437168" description="Apicidin F cluster transcription factor apf2">
    <location>
        <begin position="1"/>
        <end position="389"/>
    </location>
</feature>
<feature type="repeat" description="ANK 1" evidence="1">
    <location>
        <begin position="241"/>
        <end position="270"/>
    </location>
</feature>
<feature type="repeat" description="ANK 2" evidence="1">
    <location>
        <begin position="274"/>
        <end position="303"/>
    </location>
</feature>
<feature type="repeat" description="ANK 3" evidence="1">
    <location>
        <begin position="307"/>
        <end position="336"/>
    </location>
</feature>
<feature type="repeat" description="ANK 4" evidence="1">
    <location>
        <begin position="357"/>
        <end position="386"/>
    </location>
</feature>
<feature type="region of interest" description="Disordered" evidence="2">
    <location>
        <begin position="1"/>
        <end position="27"/>
    </location>
</feature>
<feature type="region of interest" description="Basic DNA-binding region" evidence="8">
    <location>
        <begin position="12"/>
        <end position="38"/>
    </location>
</feature>
<feature type="region of interest" description="Disordered" evidence="2">
    <location>
        <begin position="65"/>
        <end position="84"/>
    </location>
</feature>
<feature type="region of interest" description="Disordered" evidence="2">
    <location>
        <begin position="219"/>
        <end position="239"/>
    </location>
</feature>
<feature type="compositionally biased region" description="Polar residues" evidence="2">
    <location>
        <begin position="1"/>
        <end position="13"/>
    </location>
</feature>
<feature type="compositionally biased region" description="Polar residues" evidence="2">
    <location>
        <begin position="75"/>
        <end position="84"/>
    </location>
</feature>
<proteinExistence type="evidence at protein level"/>
<organism>
    <name type="scientific">Gibberella fujikuroi (strain CBS 195.34 / IMI 58289 / NRRL A-6831)</name>
    <name type="common">Bakanae and foot rot disease fungus</name>
    <name type="synonym">Fusarium fujikuroi</name>
    <dbReference type="NCBI Taxonomy" id="1279085"/>
    <lineage>
        <taxon>Eukaryota</taxon>
        <taxon>Fungi</taxon>
        <taxon>Dikarya</taxon>
        <taxon>Ascomycota</taxon>
        <taxon>Pezizomycotina</taxon>
        <taxon>Sordariomycetes</taxon>
        <taxon>Hypocreomycetidae</taxon>
        <taxon>Hypocreales</taxon>
        <taxon>Nectriaceae</taxon>
        <taxon>Fusarium</taxon>
        <taxon>Fusarium fujikuroi species complex</taxon>
    </lineage>
</organism>
<keyword id="KW-0040">ANK repeat</keyword>
<keyword id="KW-0238">DNA-binding</keyword>
<keyword id="KW-0539">Nucleus</keyword>
<keyword id="KW-1185">Reference proteome</keyword>
<keyword id="KW-0677">Repeat</keyword>
<keyword id="KW-0804">Transcription</keyword>
<keyword id="KW-0805">Transcription regulation</keyword>
<comment type="function">
    <text evidence="3 5">Transcription factor that regulates the expression of the gene cluster that mediates the biosynthesis of apicidin F (PubMed:23825955, PubMed:25058475). Binds to the eight-base-pair motif 5'-TGACGTGA-3' called the 'Api-box' that is found in all promoters of the apicidin F cluster except in the promoter region of apf2 itself (PubMed:25058475).</text>
</comment>
<comment type="subcellular location">
    <subcellularLocation>
        <location evidence="5">Nucleus</location>
    </subcellularLocation>
</comment>
<comment type="domain">
    <text evidence="8">Contains a basic DNA-binding region at the N-terminus which is usually found in bZIP transcription factors, but does not contain the characteristic leucine zipper domain (PubMed:25058475). Instead, four C-terminal ankyrin repeats were identified that were shown to confer protein-protein interaction of regulatory proteins (PubMed:25058475).</text>
</comment>
<comment type="disruption phenotype">
    <text evidence="5">Leads to the loss of apicidin F production (PubMed:25058475).</text>
</comment>
<comment type="biotechnology">
    <text evidence="4">Apicidin F, like the other known apicidins, is a cyclic tetrapeptides with anti-malarial properties via histone deacetylase inhibitory activity (PubMed:24195442).</text>
</comment>
<comment type="similarity">
    <text evidence="7">Belongs to the bZIP family. Highly divergent.</text>
</comment>
<reference key="1">
    <citation type="journal article" date="2013" name="PLoS Pathog.">
        <title>Deciphering the cryptic genome: genome-wide analyses of the rice pathogen Fusarium fujikuroi reveal complex regulation of secondary metabolism and novel metabolites.</title>
        <authorList>
            <person name="Wiemann P."/>
            <person name="Sieber C.M.K."/>
            <person name="von Bargen K.W."/>
            <person name="Studt L."/>
            <person name="Niehaus E.-M."/>
            <person name="Espino J.J."/>
            <person name="Huss K."/>
            <person name="Michielse C.B."/>
            <person name="Albermann S."/>
            <person name="Wagner D."/>
            <person name="Bergner S.V."/>
            <person name="Connolly L.R."/>
            <person name="Fischer A."/>
            <person name="Reuter G."/>
            <person name="Kleigrewe K."/>
            <person name="Bald T."/>
            <person name="Wingfield B.D."/>
            <person name="Ophir R."/>
            <person name="Freeman S."/>
            <person name="Hippler M."/>
            <person name="Smith K.M."/>
            <person name="Brown D.W."/>
            <person name="Proctor R.H."/>
            <person name="Muensterkoetter M."/>
            <person name="Freitag M."/>
            <person name="Humpf H.-U."/>
            <person name="Gueldener U."/>
            <person name="Tudzynski B."/>
        </authorList>
    </citation>
    <scope>NUCLEOTIDE SEQUENCE [LARGE SCALE GENOMIC DNA]</scope>
    <scope>FUNCTION</scope>
    <source>
        <strain>CBS 195.34 / IMI 58289 / NRRL A-6831</strain>
    </source>
</reference>
<reference key="2">
    <citation type="journal article" date="2013" name="J. Nat. Prod.">
        <title>Structure elucidation and antimalarial activity of apicidin F: an apicidin-like compound produced by Fusarium fujikuroi.</title>
        <authorList>
            <person name="von Bargen K.W."/>
            <person name="Niehaus E.M."/>
            <person name="Bergander K."/>
            <person name="Brun R."/>
            <person name="Tudzynski B."/>
            <person name="Humpf H.U."/>
        </authorList>
    </citation>
    <scope>BIOTECHNOLOGY</scope>
</reference>
<reference key="3">
    <citation type="journal article" date="2014" name="PLoS ONE">
        <title>Apicidin F: characterization and genetic manipulation of a new secondary metabolite gene cluster in the rice pathogen Fusarium fujikuroi.</title>
        <authorList>
            <person name="Niehaus E.M."/>
            <person name="Janevska S."/>
            <person name="von Bargen K.W."/>
            <person name="Sieber C.M."/>
            <person name="Harrer H."/>
            <person name="Humpf H.U."/>
            <person name="Tudzynski B."/>
        </authorList>
    </citation>
    <scope>FUNCTION</scope>
    <scope>DISRUPTION PHENOTYPE</scope>
    <scope>DOMAIN</scope>
    <scope>SUBCELLULAR LOCATION</scope>
</reference>
<protein>
    <recommendedName>
        <fullName evidence="6">Apicidin F cluster transcription factor apf2</fullName>
    </recommendedName>
    <alternativeName>
        <fullName evidence="6">Apicidin F synthesis protein 2</fullName>
    </alternativeName>
</protein>
<accession>S0DPL8</accession>
<dbReference type="EMBL" id="HF679023">
    <property type="protein sequence ID" value="CCT63352.1"/>
    <property type="molecule type" value="Genomic_DNA"/>
</dbReference>
<dbReference type="SMR" id="S0DPL8"/>
<dbReference type="STRING" id="1279085.S0DPL8"/>
<dbReference type="EnsemblFungi" id="CCT63352">
    <property type="protein sequence ID" value="CCT63352"/>
    <property type="gene ID" value="FFUJ_00012"/>
</dbReference>
<dbReference type="VEuPathDB" id="FungiDB:FFUJ_00012"/>
<dbReference type="HOGENOM" id="CLU_709899_0_0_1"/>
<dbReference type="Proteomes" id="UP000016800">
    <property type="component" value="Chromosome 1"/>
</dbReference>
<dbReference type="GO" id="GO:0005634">
    <property type="term" value="C:nucleus"/>
    <property type="evidence" value="ECO:0007669"/>
    <property type="project" value="UniProtKB-SubCell"/>
</dbReference>
<dbReference type="GO" id="GO:0003677">
    <property type="term" value="F:DNA binding"/>
    <property type="evidence" value="ECO:0007669"/>
    <property type="project" value="UniProtKB-KW"/>
</dbReference>
<dbReference type="GO" id="GO:0003700">
    <property type="term" value="F:DNA-binding transcription factor activity"/>
    <property type="evidence" value="ECO:0007669"/>
    <property type="project" value="InterPro"/>
</dbReference>
<dbReference type="CDD" id="cd14688">
    <property type="entry name" value="bZIP_YAP"/>
    <property type="match status" value="1"/>
</dbReference>
<dbReference type="Gene3D" id="1.20.5.170">
    <property type="match status" value="1"/>
</dbReference>
<dbReference type="Gene3D" id="1.25.40.20">
    <property type="entry name" value="Ankyrin repeat-containing domain"/>
    <property type="match status" value="2"/>
</dbReference>
<dbReference type="InterPro" id="IPR002110">
    <property type="entry name" value="Ankyrin_rpt"/>
</dbReference>
<dbReference type="InterPro" id="IPR036770">
    <property type="entry name" value="Ankyrin_rpt-contain_sf"/>
</dbReference>
<dbReference type="InterPro" id="IPR046347">
    <property type="entry name" value="bZIP_sf"/>
</dbReference>
<dbReference type="PANTHER" id="PTHR24171">
    <property type="entry name" value="ANKYRIN REPEAT DOMAIN-CONTAINING PROTEIN 39-RELATED"/>
    <property type="match status" value="1"/>
</dbReference>
<dbReference type="Pfam" id="PF00023">
    <property type="entry name" value="Ank"/>
    <property type="match status" value="1"/>
</dbReference>
<dbReference type="Pfam" id="PF12796">
    <property type="entry name" value="Ank_2"/>
    <property type="match status" value="1"/>
</dbReference>
<dbReference type="SMART" id="SM00248">
    <property type="entry name" value="ANK"/>
    <property type="match status" value="4"/>
</dbReference>
<dbReference type="SUPFAM" id="SSF48403">
    <property type="entry name" value="Ankyrin repeat"/>
    <property type="match status" value="1"/>
</dbReference>
<dbReference type="SUPFAM" id="SSF57959">
    <property type="entry name" value="Leucine zipper domain"/>
    <property type="match status" value="1"/>
</dbReference>
<dbReference type="PROSITE" id="PS50297">
    <property type="entry name" value="ANK_REP_REGION"/>
    <property type="match status" value="1"/>
</dbReference>
<dbReference type="PROSITE" id="PS50088">
    <property type="entry name" value="ANK_REPEAT"/>
    <property type="match status" value="4"/>
</dbReference>
<name>APF2_GIBF5</name>
<sequence length="389" mass="42375">MSPPSQDWSTITDANERRKAQNRVAQRNYRSRQKLRVELAEAILYDMPSWRTAVGLKRKRWLETPQSVEDHDTNPDSATPKPSLSSQVIQYHEEGQLVQNPTDFSMSADADVTADVSSGGESSDLSLGVFTPGDDWMNAEIDWTAAMTLAGDTSASEPDLRHRAVGPGNDIHAQPPVSIPVQAASGQHRTLTAPTPAESMSLRTEPPETAVITVTSNREVPNLGDSNEGSRSISTTKQPSEFKTPVLTAIAKGKLDIARLLISSGANIDTRDMHGRTNLHYAVSRSDAKTVRSLLELGADLLMSDASGVTALHMAVGADDQDMVKLLLGWCEQQDRTASSTDHKTTLKQCINSRDGQNMTPLHLCVVMERMDMLKILLDYGADVNIGCD</sequence>
<gene>
    <name evidence="6" type="primary">apf2</name>
    <name type="ORF">FFUJ_00012</name>
</gene>
<evidence type="ECO:0000255" key="1"/>
<evidence type="ECO:0000256" key="2">
    <source>
        <dbReference type="SAM" id="MobiDB-lite"/>
    </source>
</evidence>
<evidence type="ECO:0000269" key="3">
    <source>
    </source>
</evidence>
<evidence type="ECO:0000269" key="4">
    <source>
    </source>
</evidence>
<evidence type="ECO:0000269" key="5">
    <source>
    </source>
</evidence>
<evidence type="ECO:0000303" key="6">
    <source>
    </source>
</evidence>
<evidence type="ECO:0000305" key="7"/>
<evidence type="ECO:0000305" key="8">
    <source>
    </source>
</evidence>